<evidence type="ECO:0000250" key="1">
    <source>
        <dbReference type="UniProtKB" id="Q9H6V9"/>
    </source>
</evidence>
<evidence type="ECO:0000255" key="2">
    <source>
        <dbReference type="PROSITE-ProRule" id="PRU10037"/>
    </source>
</evidence>
<evidence type="ECO:0000269" key="3">
    <source>
    </source>
</evidence>
<evidence type="ECO:0000269" key="4">
    <source>
    </source>
</evidence>
<evidence type="ECO:0000269" key="5">
    <source>
    </source>
</evidence>
<evidence type="ECO:0000269" key="6">
    <source>
    </source>
</evidence>
<evidence type="ECO:0000303" key="7">
    <source>
    </source>
</evidence>
<evidence type="ECO:0000303" key="8">
    <source>
    </source>
</evidence>
<evidence type="ECO:0000303" key="9">
    <source>
    </source>
</evidence>
<evidence type="ECO:0000303" key="10">
    <source>
    </source>
</evidence>
<evidence type="ECO:0000305" key="11"/>
<evidence type="ECO:0000312" key="12">
    <source>
        <dbReference type="Proteomes" id="UP000000589"/>
    </source>
</evidence>
<sequence>MASEVEEQIPVREEFFLCGGVETKIIKCGPWTNLFEKQDVSKPKQLIFIIPGNPGYSAFYVPFAKALYTLMKSRFPVWIISHAGFSVTPKDKKVLAAPQEESNAQKIEDVYGLNGQIEHKIAFLRAHVPKDVKLILIGHSVGTYMTLHVMKRVLELPVAHAFLLFPTIERMSESPNGKFATPFLCQFRYLLYATSYLLFKPCPEVIKSFIIQKLMGQMNIKLELPLTDILQPFCLANAAYLGSQEMVQIVKRDDDIIKEFLPKLKFYYGKTDGWCPVKYYEDMKKDFPEGNIYLCEKGIPHAFVLDFSQEMATIVAEWINNRPPRK</sequence>
<organism evidence="12">
    <name type="scientific">Mus musculus</name>
    <name type="common">Mouse</name>
    <dbReference type="NCBI Taxonomy" id="10090"/>
    <lineage>
        <taxon>Eukaryota</taxon>
        <taxon>Metazoa</taxon>
        <taxon>Chordata</taxon>
        <taxon>Craniata</taxon>
        <taxon>Vertebrata</taxon>
        <taxon>Euteleostomi</taxon>
        <taxon>Mammalia</taxon>
        <taxon>Eutheria</taxon>
        <taxon>Euarchontoglires</taxon>
        <taxon>Glires</taxon>
        <taxon>Rodentia</taxon>
        <taxon>Myomorpha</taxon>
        <taxon>Muroidea</taxon>
        <taxon>Muridae</taxon>
        <taxon>Murinae</taxon>
        <taxon>Mus</taxon>
        <taxon>Mus</taxon>
    </lineage>
</organism>
<reference key="1">
    <citation type="journal article" date="2005" name="Science">
        <title>The transcriptional landscape of the mammalian genome.</title>
        <authorList>
            <person name="Carninci P."/>
            <person name="Kasukawa T."/>
            <person name="Katayama S."/>
            <person name="Gough J."/>
            <person name="Frith M.C."/>
            <person name="Maeda N."/>
            <person name="Oyama R."/>
            <person name="Ravasi T."/>
            <person name="Lenhard B."/>
            <person name="Wells C."/>
            <person name="Kodzius R."/>
            <person name="Shimokawa K."/>
            <person name="Bajic V.B."/>
            <person name="Brenner S.E."/>
            <person name="Batalov S."/>
            <person name="Forrest A.R."/>
            <person name="Zavolan M."/>
            <person name="Davis M.J."/>
            <person name="Wilming L.G."/>
            <person name="Aidinis V."/>
            <person name="Allen J.E."/>
            <person name="Ambesi-Impiombato A."/>
            <person name="Apweiler R."/>
            <person name="Aturaliya R.N."/>
            <person name="Bailey T.L."/>
            <person name="Bansal M."/>
            <person name="Baxter L."/>
            <person name="Beisel K.W."/>
            <person name="Bersano T."/>
            <person name="Bono H."/>
            <person name="Chalk A.M."/>
            <person name="Chiu K.P."/>
            <person name="Choudhary V."/>
            <person name="Christoffels A."/>
            <person name="Clutterbuck D.R."/>
            <person name="Crowe M.L."/>
            <person name="Dalla E."/>
            <person name="Dalrymple B.P."/>
            <person name="de Bono B."/>
            <person name="Della Gatta G."/>
            <person name="di Bernardo D."/>
            <person name="Down T."/>
            <person name="Engstrom P."/>
            <person name="Fagiolini M."/>
            <person name="Faulkner G."/>
            <person name="Fletcher C.F."/>
            <person name="Fukushima T."/>
            <person name="Furuno M."/>
            <person name="Futaki S."/>
            <person name="Gariboldi M."/>
            <person name="Georgii-Hemming P."/>
            <person name="Gingeras T.R."/>
            <person name="Gojobori T."/>
            <person name="Green R.E."/>
            <person name="Gustincich S."/>
            <person name="Harbers M."/>
            <person name="Hayashi Y."/>
            <person name="Hensch T.K."/>
            <person name="Hirokawa N."/>
            <person name="Hill D."/>
            <person name="Huminiecki L."/>
            <person name="Iacono M."/>
            <person name="Ikeo K."/>
            <person name="Iwama A."/>
            <person name="Ishikawa T."/>
            <person name="Jakt M."/>
            <person name="Kanapin A."/>
            <person name="Katoh M."/>
            <person name="Kawasawa Y."/>
            <person name="Kelso J."/>
            <person name="Kitamura H."/>
            <person name="Kitano H."/>
            <person name="Kollias G."/>
            <person name="Krishnan S.P."/>
            <person name="Kruger A."/>
            <person name="Kummerfeld S.K."/>
            <person name="Kurochkin I.V."/>
            <person name="Lareau L.F."/>
            <person name="Lazarevic D."/>
            <person name="Lipovich L."/>
            <person name="Liu J."/>
            <person name="Liuni S."/>
            <person name="McWilliam S."/>
            <person name="Madan Babu M."/>
            <person name="Madera M."/>
            <person name="Marchionni L."/>
            <person name="Matsuda H."/>
            <person name="Matsuzawa S."/>
            <person name="Miki H."/>
            <person name="Mignone F."/>
            <person name="Miyake S."/>
            <person name="Morris K."/>
            <person name="Mottagui-Tabar S."/>
            <person name="Mulder N."/>
            <person name="Nakano N."/>
            <person name="Nakauchi H."/>
            <person name="Ng P."/>
            <person name="Nilsson R."/>
            <person name="Nishiguchi S."/>
            <person name="Nishikawa S."/>
            <person name="Nori F."/>
            <person name="Ohara O."/>
            <person name="Okazaki Y."/>
            <person name="Orlando V."/>
            <person name="Pang K.C."/>
            <person name="Pavan W.J."/>
            <person name="Pavesi G."/>
            <person name="Pesole G."/>
            <person name="Petrovsky N."/>
            <person name="Piazza S."/>
            <person name="Reed J."/>
            <person name="Reid J.F."/>
            <person name="Ring B.Z."/>
            <person name="Ringwald M."/>
            <person name="Rost B."/>
            <person name="Ruan Y."/>
            <person name="Salzberg S.L."/>
            <person name="Sandelin A."/>
            <person name="Schneider C."/>
            <person name="Schoenbach C."/>
            <person name="Sekiguchi K."/>
            <person name="Semple C.A."/>
            <person name="Seno S."/>
            <person name="Sessa L."/>
            <person name="Sheng Y."/>
            <person name="Shibata Y."/>
            <person name="Shimada H."/>
            <person name="Shimada K."/>
            <person name="Silva D."/>
            <person name="Sinclair B."/>
            <person name="Sperling S."/>
            <person name="Stupka E."/>
            <person name="Sugiura K."/>
            <person name="Sultana R."/>
            <person name="Takenaka Y."/>
            <person name="Taki K."/>
            <person name="Tammoja K."/>
            <person name="Tan S.L."/>
            <person name="Tang S."/>
            <person name="Taylor M.S."/>
            <person name="Tegner J."/>
            <person name="Teichmann S.A."/>
            <person name="Ueda H.R."/>
            <person name="van Nimwegen E."/>
            <person name="Verardo R."/>
            <person name="Wei C.L."/>
            <person name="Yagi K."/>
            <person name="Yamanishi H."/>
            <person name="Zabarovsky E."/>
            <person name="Zhu S."/>
            <person name="Zimmer A."/>
            <person name="Hide W."/>
            <person name="Bult C."/>
            <person name="Grimmond S.M."/>
            <person name="Teasdale R.D."/>
            <person name="Liu E.T."/>
            <person name="Brusic V."/>
            <person name="Quackenbush J."/>
            <person name="Wahlestedt C."/>
            <person name="Mattick J.S."/>
            <person name="Hume D.A."/>
            <person name="Kai C."/>
            <person name="Sasaki D."/>
            <person name="Tomaru Y."/>
            <person name="Fukuda S."/>
            <person name="Kanamori-Katayama M."/>
            <person name="Suzuki M."/>
            <person name="Aoki J."/>
            <person name="Arakawa T."/>
            <person name="Iida J."/>
            <person name="Imamura K."/>
            <person name="Itoh M."/>
            <person name="Kato T."/>
            <person name="Kawaji H."/>
            <person name="Kawagashira N."/>
            <person name="Kawashima T."/>
            <person name="Kojima M."/>
            <person name="Kondo S."/>
            <person name="Konno H."/>
            <person name="Nakano K."/>
            <person name="Ninomiya N."/>
            <person name="Nishio T."/>
            <person name="Okada M."/>
            <person name="Plessy C."/>
            <person name="Shibata K."/>
            <person name="Shiraki T."/>
            <person name="Suzuki S."/>
            <person name="Tagami M."/>
            <person name="Waki K."/>
            <person name="Watahiki A."/>
            <person name="Okamura-Oho Y."/>
            <person name="Suzuki H."/>
            <person name="Kawai J."/>
            <person name="Hayashizaki Y."/>
        </authorList>
    </citation>
    <scope>NUCLEOTIDE SEQUENCE [LARGE SCALE MRNA] (ISOFORMS 1; 4 AND 5)</scope>
    <source>
        <strain>C57BL/6J</strain>
        <tissue>Diencephalon</tissue>
        <tissue>Head</tissue>
        <tissue>Hypothalamus</tissue>
    </source>
</reference>
<reference key="2">
    <citation type="journal article" date="2004" name="Genome Res.">
        <title>The status, quality, and expansion of the NIH full-length cDNA project: the Mammalian Gene Collection (MGC).</title>
        <authorList>
            <consortium name="The MGC Project Team"/>
        </authorList>
    </citation>
    <scope>NUCLEOTIDE SEQUENCE [LARGE SCALE MRNA] (ISOFORMS 1 AND 2)</scope>
    <source>
        <strain>C57BL/6J</strain>
        <strain>FVB/N</strain>
        <tissue>Brain</tissue>
        <tissue>Colon</tissue>
    </source>
</reference>
<reference evidence="12" key="3">
    <citation type="journal article" date="2009" name="PLoS Biol.">
        <title>Lineage-specific biology revealed by a finished genome assembly of the mouse.</title>
        <authorList>
            <person name="Church D.M."/>
            <person name="Goodstadt L."/>
            <person name="Hillier L.W."/>
            <person name="Zody M.C."/>
            <person name="Goldstein S."/>
            <person name="She X."/>
            <person name="Bult C.J."/>
            <person name="Agarwala R."/>
            <person name="Cherry J.L."/>
            <person name="DiCuccio M."/>
            <person name="Hlavina W."/>
            <person name="Kapustin Y."/>
            <person name="Meric P."/>
            <person name="Maglott D."/>
            <person name="Birtle Z."/>
            <person name="Marques A.C."/>
            <person name="Graves T."/>
            <person name="Zhou S."/>
            <person name="Teague B."/>
            <person name="Potamousis K."/>
            <person name="Churas C."/>
            <person name="Place M."/>
            <person name="Herschleb J."/>
            <person name="Runnheim R."/>
            <person name="Forrest D."/>
            <person name="Amos-Landgraf J."/>
            <person name="Schwartz D.C."/>
            <person name="Cheng Z."/>
            <person name="Lindblad-Toh K."/>
            <person name="Eichler E.E."/>
            <person name="Ponting C.P."/>
        </authorList>
    </citation>
    <scope>NUCLEOTIDE SEQUENCE [LARGE SCALE GENOMIC DNA] (ISOFORMS 1 AND 3)</scope>
    <source>
        <strain evidence="12">C57BL/6J</strain>
    </source>
</reference>
<reference key="4">
    <citation type="journal article" date="2010" name="Cell">
        <title>A tissue-specific atlas of mouse protein phosphorylation and expression.</title>
        <authorList>
            <person name="Huttlin E.L."/>
            <person name="Jedrychowski M.P."/>
            <person name="Elias J.E."/>
            <person name="Goswami T."/>
            <person name="Rad R."/>
            <person name="Beausoleil S.A."/>
            <person name="Villen J."/>
            <person name="Haas W."/>
            <person name="Sowa M.E."/>
            <person name="Gygi S.P."/>
        </authorList>
    </citation>
    <scope>IDENTIFICATION BY MASS SPECTROMETRY [LARGE SCALE ANALYSIS]</scope>
    <source>
        <tissue>Brain</tissue>
        <tissue>Brown adipose tissue</tissue>
        <tissue>Heart</tissue>
        <tissue>Liver</tissue>
        <tissue>Lung</tissue>
        <tissue>Pancreas</tissue>
        <tissue>Spleen</tissue>
    </source>
</reference>
<reference key="5">
    <citation type="journal article" date="2013" name="J. Cell Sci.">
        <title>The evolutionarily conserved protein CG9186 is associated with lipid droplets, required for their positioning and for fat storage.</title>
        <authorList>
            <person name="Thiel K."/>
            <person name="Heier C."/>
            <person name="Haberl V."/>
            <person name="Thul P.J."/>
            <person name="Oberer M."/>
            <person name="Lass A."/>
            <person name="Jackle H."/>
            <person name="Beller M."/>
        </authorList>
    </citation>
    <scope>FUNCTION</scope>
    <scope>SUBCELLULAR LOCATION</scope>
</reference>
<reference key="6">
    <citation type="journal article" date="2014" name="Arterioscler. Thromb. Vasc. Biol.">
        <title>Novel lipid droplet-associated serine hydrolase regulates macrophage cholesterol mobilization.</title>
        <authorList>
            <person name="Goo Y.H."/>
            <person name="Son S.H."/>
            <person name="Kreienberg P.B."/>
            <person name="Paul A."/>
        </authorList>
    </citation>
    <scope>FUNCTION</scope>
    <scope>CATALYTIC ACTIVITY</scope>
    <scope>IDENTIFICATION BY MASS SPECTROMETRY</scope>
    <scope>SUBCELLULAR LOCATION</scope>
    <scope>TISSUE SPECIFICITY</scope>
    <scope>MUTAGENESIS OF SER-140</scope>
</reference>
<reference key="7">
    <citation type="journal article" date="2017" name="J. Lipid Res.">
        <title>Mice lacking lipid droplet-associated hydrolase, a gene linked to human prostate cancer, have normal cholesterol ester metabolism.</title>
        <authorList>
            <person name="Kory N."/>
            <person name="Grond S."/>
            <person name="Kamat S.S."/>
            <person name="Li Z."/>
            <person name="Krahmer N."/>
            <person name="Chitraju C."/>
            <person name="Zhou P."/>
            <person name="Froehlich F."/>
            <person name="Semova I."/>
            <person name="Ejsing C."/>
            <person name="Zechner R."/>
            <person name="Cravatt B.F."/>
            <person name="Farese R.V. Jr."/>
            <person name="Walther T.C."/>
        </authorList>
    </citation>
    <scope>FUNCTION</scope>
    <scope>TISSUE SPECIFICITY</scope>
    <scope>DISRUPTION PHENOTYPE</scope>
</reference>
<reference key="8">
    <citation type="journal article" date="2017" name="Sci. Rep.">
        <title>Lipid Droplet-Associated Hydrolase Promotes Lipid Droplet Fusion and Enhances ATGL Degradation and Triglyceride Accumulation.</title>
        <authorList>
            <person name="Goo Y.H."/>
            <person name="Son S.H."/>
            <person name="Paul A."/>
        </authorList>
    </citation>
    <scope>FUNCTION</scope>
    <scope>SUBCELLULAR LOCATION</scope>
    <scope>MUTAGENESIS OF HIS-127; SER-140 AND HIS-301</scope>
</reference>
<proteinExistence type="evidence at protein level"/>
<gene>
    <name evidence="9" type="primary">Ldah</name>
</gene>
<comment type="function">
    <text evidence="3 4 5 6">Probable serine lipid hydrolase associated with lipid droplets (PubMed:24357060, PubMed:28578400). Has low cholesterol esterase activity (PubMed:24357060, PubMed:27836991). Appears to lack triglyceride lipase activity (PubMed:23525007, PubMed:24357060, PubMed:27836991). Involved in cholesterol and triglyceride homeostasis; stimulates cellular triglyceride accumulation and cellular cholesterol release (PubMed:24357060, PubMed:28578400). Acts antagonistically with PNPLA2/ATGL in regulation of cellular lipid stores (PubMed:28578400). May regulate triglyceride accumulation indirectly through stimulation of PNPLA2/ATGL ubiquitination and proteasomal degradation (PubMed:28578400). Promotes microtubule-dependent lipid droplet fusion (PubMed:28578400). Highly expressed in macrophage-rich areas in atherosclerotic lesions, suggesting that it could promote cholesterol ester turnover in macrophages (PubMed:24357060).</text>
</comment>
<comment type="function">
    <molecule>Isoform 1</molecule>
    <text evidence="6">Stimulates cellular triglyceride accumulation and lipid droplet fusion.</text>
</comment>
<comment type="function">
    <molecule>Isoform 2</molecule>
    <text evidence="6">Associates with lipid droplets but does not stimulate cellular triglyceride accumulation, lipid droplet fusion or ATGL proteasomal degradation.</text>
</comment>
<comment type="function">
    <molecule>Isoform 3</molecule>
    <text evidence="6">Stimulates cellular triglyceride accumulation and lipid droplet fusion.</text>
</comment>
<comment type="catalytic activity">
    <reaction evidence="4">
        <text>a cholesterol ester + H2O = cholesterol + a fatty acid + H(+)</text>
        <dbReference type="Rhea" id="RHEA:36403"/>
        <dbReference type="ChEBI" id="CHEBI:15377"/>
        <dbReference type="ChEBI" id="CHEBI:15378"/>
        <dbReference type="ChEBI" id="CHEBI:16113"/>
        <dbReference type="ChEBI" id="CHEBI:17002"/>
        <dbReference type="ChEBI" id="CHEBI:28868"/>
        <dbReference type="EC" id="3.1.1.13"/>
    </reaction>
    <physiologicalReaction direction="left-to-right" evidence="4">
        <dbReference type="Rhea" id="RHEA:36404"/>
    </physiologicalReaction>
</comment>
<comment type="subcellular location">
    <subcellularLocation>
        <location evidence="3 4 6">Lipid droplet</location>
    </subcellularLocation>
    <subcellularLocation>
        <location evidence="3">Endoplasmic reticulum</location>
    </subcellularLocation>
    <text evidence="3 6">Localizes to the endoplasmic reticulum in absence of lipid droplets and translocates to lipid droplets upon lipid storage induction (PubMed:23525007). Lipid droplet localization does not require hydrolase activity (PubMed:28578400).</text>
</comment>
<comment type="alternative products">
    <event type="alternative splicing"/>
    <isoform>
        <id>Q8BVA5-1</id>
        <name evidence="10">1</name>
        <sequence type="displayed"/>
    </isoform>
    <isoform>
        <id>Q8BVA5-2</id>
        <name evidence="10">2</name>
        <sequence type="described" ref="VSP_027797"/>
    </isoform>
    <isoform>
        <id>Q8BVA5-3</id>
        <name>5</name>
        <sequence type="described" ref="VSP_027796"/>
    </isoform>
    <isoform>
        <id>Q8BVA5-4</id>
        <name>4</name>
        <sequence type="described" ref="VSP_027796 VSP_027798 VSP_027799"/>
    </isoform>
    <isoform>
        <id>Q8BVA5-5</id>
        <name evidence="10">3</name>
        <sequence type="described" ref="VSP_062355"/>
    </isoform>
    <text evidence="6">mRNAs for isoforms 1, 2 and 3 are present in differentiating adipocytes (PubMed:28578400). Isoform 1 is expressed at high levels throughout differentiation while isoforms 2 and 3 expression increases during differentiation but remain lower than isoform 1 levels (PubMed:28578400).</text>
</comment>
<comment type="tissue specificity">
    <text evidence="4 5">Expressed in liver, adrenal gland, prostate, spleen, kidney, brown and white adipose tissue, testis and to a lesser extent in brain (at protein level) (PubMed:24357060, PubMed:27836991). Expressed in peritoneal macrophages and bone marrow-derived macrophages (at protein level) (PubMed:24357060, PubMed:27836991). Highly expressed in macrophage and foam cell-rich areas in atherosclerotic lesions (at protein level) (PubMed:24357060). mRNA, but no protein, expressed in heart and muscle (PubMed:24357060, PubMed:27836991).</text>
</comment>
<comment type="disruption phenotype">
    <text evidence="5">Knockout mice have no obvious defects (PubMed:27836991). Size of adipocytes is normal (PubMed:27836991). Lipid metabolism is normal (PubMed:27836991). Cholesterol ester turnover or hydrolysis in bone marrow macrophages, brown adipose tissue or liver is normal (PubMed:27836991). No defect in body composition, energy expenditure, locomotor activity, water or food intake, respiratory exchange ratio, oxygen consumption, carbon dioxide production or glucose homeostasis (PubMed:27836991).</text>
</comment>
<comment type="similarity">
    <text evidence="11">Belongs to the AB hydrolase superfamily. LDAH family.</text>
</comment>
<comment type="caution">
    <text evidence="3 4 5 11">The catalytic activity is unsure despite catalytic sites being conserved (PubMed:23525007, PubMed:27836991). One report shows that LDAH has low cholesterol esterase activity when overexpressed in RAW 264.7 macrophages or in HeLa cells (PubMed:24357060). However, in another study, LDAH lacks cholesterol esterase activity when overexpressed in Hela cells (PubMed:27836991). LDAH is not the only cellular cholesterol esterase and its activity may be too low to detect under certain experimental conditions. Lacks lipolytic activity towards trioleoylglycerol, dioleoylglycerol or monooleoylglycerol when overexpressed in COS-7 cells or Hela cells (PubMed:23525007, PubMed:27836991).</text>
</comment>
<protein>
    <recommendedName>
        <fullName evidence="9">Lipid droplet-associated hydrolase</fullName>
        <ecNumber evidence="4">3.1.1.13</ecNumber>
    </recommendedName>
    <alternativeName>
        <fullName evidence="9">Lipid droplet-associated serine hydrolase</fullName>
        <shortName evidence="9">mLDAH</shortName>
    </alternativeName>
</protein>
<feature type="chain" id="PRO_0000300125" description="Lipid droplet-associated hydrolase">
    <location>
        <begin position="1"/>
        <end position="326"/>
    </location>
</feature>
<feature type="active site" description="Nucleophile" evidence="2">
    <location>
        <position position="140"/>
    </location>
</feature>
<feature type="active site" description="Charge relay system" evidence="1">
    <location>
        <position position="272"/>
    </location>
</feature>
<feature type="active site" description="Charge relay system" evidence="1">
    <location>
        <position position="301"/>
    </location>
</feature>
<feature type="splice variant" id="VSP_027796" description="In isoform 5 and isoform 4." evidence="8">
    <location>
        <begin position="1"/>
        <end position="170"/>
    </location>
</feature>
<feature type="splice variant" id="VSP_027797" description="In isoform 2." evidence="7">
    <location>
        <begin position="237"/>
        <end position="326"/>
    </location>
</feature>
<feature type="splice variant" id="VSP_062355" description="In isoform 3.">
    <original>LKFYYGKTDGWCPVKYYEDMKKDFPEGNIYLCEKGIPHAFVLDFSQEMATIVAEWINNRPPRK</original>
    <variation>VTMGTFWGS</variation>
    <location>
        <begin position="264"/>
        <end position="326"/>
    </location>
</feature>
<feature type="splice variant" id="VSP_027798" description="In isoform 4." evidence="8">
    <original>LKFYYGK</original>
    <variation>EGNSTLP</variation>
    <location>
        <begin position="264"/>
        <end position="270"/>
    </location>
</feature>
<feature type="splice variant" id="VSP_027799" description="In isoform 4." evidence="8">
    <location>
        <begin position="271"/>
        <end position="326"/>
    </location>
</feature>
<feature type="mutagenesis site" description="No effect on cellular triglyceride accumulation." evidence="6">
    <original>H</original>
    <variation>A</variation>
    <location>
        <position position="127"/>
    </location>
</feature>
<feature type="mutagenesis site" description="Reduces cholesterol efflux but no effect on cellular triglyceride accumulation." evidence="6">
    <original>S</original>
    <variation>A</variation>
    <location>
        <position position="140"/>
    </location>
</feature>
<feature type="mutagenesis site" description="Abolishes active hydrolase probe binding in serine hydrolase assays. Abrogates cholesterol esterase activity and reduces cholesterol efflux. No effect on lipid droplet localization." evidence="4 6">
    <original>S</original>
    <variation>C</variation>
    <location>
        <position position="140"/>
    </location>
</feature>
<feature type="mutagenesis site" description="No effect on cellular triglyceride accumulation." evidence="6">
    <original>H</original>
    <variation>A</variation>
    <location>
        <position position="301"/>
    </location>
</feature>
<feature type="sequence conflict" description="In Ref. 2; AAH46986/AAH57311 and 3." evidence="11" ref="2 3">
    <original>L</original>
    <variation>P</variation>
    <location>
        <position position="154"/>
    </location>
</feature>
<keyword id="KW-0025">Alternative splicing</keyword>
<keyword id="KW-0256">Endoplasmic reticulum</keyword>
<keyword id="KW-0378">Hydrolase</keyword>
<keyword id="KW-0551">Lipid droplet</keyword>
<keyword id="KW-1185">Reference proteome</keyword>
<name>LDAH_MOUSE</name>
<accession>Q8BVA5</accession>
<accession>A0A0F6AIX5</accession>
<accession>A0A1W2P7C8</accession>
<accession>Q3TRE7</accession>
<accession>Q5RL52</accession>
<accession>Q6PG15</accession>
<accession>Q8BVV0</accession>
<dbReference type="EC" id="3.1.1.13" evidence="4"/>
<dbReference type="EMBL" id="AK076460">
    <property type="protein sequence ID" value="BAC36352.1"/>
    <property type="molecule type" value="mRNA"/>
</dbReference>
<dbReference type="EMBL" id="AK079099">
    <property type="protein sequence ID" value="BAC37539.1"/>
    <property type="molecule type" value="mRNA"/>
</dbReference>
<dbReference type="EMBL" id="AK162850">
    <property type="protein sequence ID" value="BAE37083.1"/>
    <property type="molecule type" value="mRNA"/>
</dbReference>
<dbReference type="EMBL" id="BC046986">
    <property type="protein sequence ID" value="AAH46986.1"/>
    <property type="molecule type" value="mRNA"/>
</dbReference>
<dbReference type="EMBL" id="BC057311">
    <property type="protein sequence ID" value="AAH57311.1"/>
    <property type="molecule type" value="mRNA"/>
</dbReference>
<dbReference type="CCDS" id="CCDS25798.1">
    <molecule id="Q8BVA5-1"/>
</dbReference>
<dbReference type="CCDS" id="CCDS49023.1">
    <molecule id="Q8BVA5-2"/>
</dbReference>
<dbReference type="CCDS" id="CCDS88307.1">
    <molecule id="Q8BVA5-5"/>
</dbReference>
<dbReference type="RefSeq" id="NP_001161239.1">
    <property type="nucleotide sequence ID" value="NM_001167767.1"/>
</dbReference>
<dbReference type="RefSeq" id="NP_765989.3">
    <property type="nucleotide sequence ID" value="NM_172401.4"/>
</dbReference>
<dbReference type="RefSeq" id="XP_006515263.2">
    <property type="nucleotide sequence ID" value="XM_006515200.2"/>
</dbReference>
<dbReference type="RefSeq" id="XP_006515267.1">
    <property type="nucleotide sequence ID" value="XM_006515204.2"/>
</dbReference>
<dbReference type="BioGRID" id="213072">
    <property type="interactions" value="1"/>
</dbReference>
<dbReference type="FunCoup" id="Q8BVA5">
    <property type="interactions" value="963"/>
</dbReference>
<dbReference type="STRING" id="10090.ENSMUSP00000042285"/>
<dbReference type="ESTHER" id="mouse-Ldah">
    <property type="family name" value="LIDHydrolase"/>
</dbReference>
<dbReference type="iPTMnet" id="Q8BVA5"/>
<dbReference type="PhosphoSitePlus" id="Q8BVA5"/>
<dbReference type="SwissPalm" id="Q8BVA5"/>
<dbReference type="jPOST" id="Q8BVA5"/>
<dbReference type="PaxDb" id="10090-ENSMUSP00000042285"/>
<dbReference type="PeptideAtlas" id="Q8BVA5"/>
<dbReference type="ProteomicsDB" id="264918">
    <molecule id="Q8BVA5-1"/>
</dbReference>
<dbReference type="ProteomicsDB" id="264919">
    <molecule id="Q8BVA5-2"/>
</dbReference>
<dbReference type="ProteomicsDB" id="264920">
    <molecule id="Q8BVA5-3"/>
</dbReference>
<dbReference type="ProteomicsDB" id="264921">
    <molecule id="Q8BVA5-4"/>
</dbReference>
<dbReference type="ProteomicsDB" id="326427"/>
<dbReference type="ProteomicsDB" id="332892"/>
<dbReference type="Pumba" id="Q8BVA5"/>
<dbReference type="Antibodypedia" id="27316">
    <property type="antibodies" value="144 antibodies from 17 providers"/>
</dbReference>
<dbReference type="DNASU" id="68832"/>
<dbReference type="GeneID" id="68832"/>
<dbReference type="KEGG" id="mmu:68832"/>
<dbReference type="UCSC" id="uc007mzg.2">
    <molecule id="Q8BVA5-1"/>
    <property type="organism name" value="mouse"/>
</dbReference>
<dbReference type="UCSC" id="uc007mzk.2">
    <molecule id="Q8BVA5-3"/>
    <property type="organism name" value="mouse"/>
</dbReference>
<dbReference type="AGR" id="MGI:1916082"/>
<dbReference type="CTD" id="60526"/>
<dbReference type="MGI" id="MGI:1916082">
    <property type="gene designation" value="Ldah"/>
</dbReference>
<dbReference type="VEuPathDB" id="HostDB:ENSMUSG00000037669"/>
<dbReference type="eggNOG" id="KOG3975">
    <property type="taxonomic scope" value="Eukaryota"/>
</dbReference>
<dbReference type="InParanoid" id="Q8BVA5"/>
<dbReference type="OMA" id="WVPVSYY"/>
<dbReference type="OrthoDB" id="448051at2759"/>
<dbReference type="PhylomeDB" id="Q8BVA5"/>
<dbReference type="TreeFam" id="TF313050"/>
<dbReference type="BioGRID-ORCS" id="68832">
    <property type="hits" value="0 hits in 76 CRISPR screens"/>
</dbReference>
<dbReference type="ChiTaRS" id="Ldah">
    <property type="organism name" value="mouse"/>
</dbReference>
<dbReference type="PRO" id="PR:Q8BVA5"/>
<dbReference type="Proteomes" id="UP000000589">
    <property type="component" value="Chromosome 12"/>
</dbReference>
<dbReference type="RNAct" id="Q8BVA5">
    <property type="molecule type" value="protein"/>
</dbReference>
<dbReference type="Bgee" id="ENSMUSG00000037669">
    <property type="expression patterns" value="Expressed in otic placode and 254 other cell types or tissues"/>
</dbReference>
<dbReference type="GO" id="GO:0005783">
    <property type="term" value="C:endoplasmic reticulum"/>
    <property type="evidence" value="ECO:0000250"/>
    <property type="project" value="UniProtKB"/>
</dbReference>
<dbReference type="GO" id="GO:0005811">
    <property type="term" value="C:lipid droplet"/>
    <property type="evidence" value="ECO:0000314"/>
    <property type="project" value="UniProtKB"/>
</dbReference>
<dbReference type="GO" id="GO:0004771">
    <property type="term" value="F:sterol ester esterase activity"/>
    <property type="evidence" value="ECO:0000314"/>
    <property type="project" value="UniProtKB"/>
</dbReference>
<dbReference type="GO" id="GO:0042632">
    <property type="term" value="P:cholesterol homeostasis"/>
    <property type="evidence" value="ECO:0000315"/>
    <property type="project" value="UniProtKB"/>
</dbReference>
<dbReference type="GO" id="GO:0090077">
    <property type="term" value="P:foam cell differentiation"/>
    <property type="evidence" value="ECO:0000304"/>
    <property type="project" value="UniProtKB"/>
</dbReference>
<dbReference type="GO" id="GO:0035356">
    <property type="term" value="P:intracellular triglyceride homeostasis"/>
    <property type="evidence" value="ECO:0000315"/>
    <property type="project" value="UniProtKB"/>
</dbReference>
<dbReference type="GO" id="GO:0160077">
    <property type="term" value="P:lipid droplet fusion"/>
    <property type="evidence" value="ECO:0000314"/>
    <property type="project" value="UniProtKB"/>
</dbReference>
<dbReference type="GO" id="GO:0019915">
    <property type="term" value="P:lipid storage"/>
    <property type="evidence" value="ECO:0007669"/>
    <property type="project" value="InterPro"/>
</dbReference>
<dbReference type="FunFam" id="3.40.50.1820:FF:000068">
    <property type="entry name" value="Lipid droplet associated hydrolase"/>
    <property type="match status" value="1"/>
</dbReference>
<dbReference type="Gene3D" id="3.40.50.1820">
    <property type="entry name" value="alpha/beta hydrolase"/>
    <property type="match status" value="1"/>
</dbReference>
<dbReference type="InterPro" id="IPR029058">
    <property type="entry name" value="AB_hydrolase_fold"/>
</dbReference>
<dbReference type="InterPro" id="IPR019363">
    <property type="entry name" value="LDAH"/>
</dbReference>
<dbReference type="PANTHER" id="PTHR13390">
    <property type="entry name" value="LIPASE"/>
    <property type="match status" value="1"/>
</dbReference>
<dbReference type="PANTHER" id="PTHR13390:SF0">
    <property type="entry name" value="LIPID DROPLET-ASSOCIATED HYDROLASE"/>
    <property type="match status" value="1"/>
</dbReference>
<dbReference type="Pfam" id="PF10230">
    <property type="entry name" value="LIDHydrolase"/>
    <property type="match status" value="1"/>
</dbReference>
<dbReference type="SUPFAM" id="SSF53474">
    <property type="entry name" value="alpha/beta-Hydrolases"/>
    <property type="match status" value="1"/>
</dbReference>
<dbReference type="PROSITE" id="PS00120">
    <property type="entry name" value="LIPASE_SER"/>
    <property type="match status" value="1"/>
</dbReference>